<dbReference type="EMBL" id="AAFC03100124">
    <property type="status" value="NOT_ANNOTATED_CDS"/>
    <property type="molecule type" value="Genomic_DNA"/>
</dbReference>
<dbReference type="EMBL" id="AAFC03100125">
    <property type="status" value="NOT_ANNOTATED_CDS"/>
    <property type="molecule type" value="Genomic_DNA"/>
</dbReference>
<dbReference type="EMBL" id="AAFC03100129">
    <property type="status" value="NOT_ANNOTATED_CDS"/>
    <property type="molecule type" value="Genomic_DNA"/>
</dbReference>
<dbReference type="EMBL" id="AAFC03100133">
    <property type="status" value="NOT_ANNOTATED_CDS"/>
    <property type="molecule type" value="Genomic_DNA"/>
</dbReference>
<dbReference type="EMBL" id="AAFC03104636">
    <property type="status" value="NOT_ANNOTATED_CDS"/>
    <property type="molecule type" value="Genomic_DNA"/>
</dbReference>
<dbReference type="EMBL" id="AAFC03104637">
    <property type="status" value="NOT_ANNOTATED_CDS"/>
    <property type="molecule type" value="Genomic_DNA"/>
</dbReference>
<dbReference type="EMBL" id="AAFC03122887">
    <property type="status" value="NOT_ANNOTATED_CDS"/>
    <property type="molecule type" value="Genomic_DNA"/>
</dbReference>
<dbReference type="SMR" id="E1BLK7"/>
<dbReference type="FunCoup" id="E1BLK7">
    <property type="interactions" value="41"/>
</dbReference>
<dbReference type="STRING" id="9913.ENSBTAP00000024097"/>
<dbReference type="PaxDb" id="9913-ENSBTAP00000024097"/>
<dbReference type="eggNOG" id="ENOG502QQMJ">
    <property type="taxonomic scope" value="Eukaryota"/>
</dbReference>
<dbReference type="HOGENOM" id="CLU_041752_0_0_1"/>
<dbReference type="InParanoid" id="E1BLK7"/>
<dbReference type="OrthoDB" id="5966837at2759"/>
<dbReference type="Proteomes" id="UP000009136">
    <property type="component" value="Unplaced"/>
</dbReference>
<dbReference type="GO" id="GO:0005737">
    <property type="term" value="C:cytoplasm"/>
    <property type="evidence" value="ECO:0000250"/>
    <property type="project" value="UniProtKB"/>
</dbReference>
<dbReference type="GO" id="GO:0005829">
    <property type="term" value="C:cytosol"/>
    <property type="evidence" value="ECO:0007669"/>
    <property type="project" value="UniProtKB-SubCell"/>
</dbReference>
<dbReference type="GO" id="GO:0043231">
    <property type="term" value="C:intracellular membrane-bounded organelle"/>
    <property type="evidence" value="ECO:0000250"/>
    <property type="project" value="UniProtKB"/>
</dbReference>
<dbReference type="GO" id="GO:0005759">
    <property type="term" value="C:mitochondrial matrix"/>
    <property type="evidence" value="ECO:0000250"/>
    <property type="project" value="UniProtKB"/>
</dbReference>
<dbReference type="GO" id="GO:0005741">
    <property type="term" value="C:mitochondrial outer membrane"/>
    <property type="evidence" value="ECO:0000318"/>
    <property type="project" value="GO_Central"/>
</dbReference>
<dbReference type="GO" id="GO:0005739">
    <property type="term" value="C:mitochondrion"/>
    <property type="evidence" value="ECO:0000250"/>
    <property type="project" value="UniProtKB"/>
</dbReference>
<dbReference type="GO" id="GO:1901612">
    <property type="term" value="F:cardiolipin binding"/>
    <property type="evidence" value="ECO:0000250"/>
    <property type="project" value="UniProtKB"/>
</dbReference>
<dbReference type="GO" id="GO:0035694">
    <property type="term" value="P:mitochondrial protein catabolic process"/>
    <property type="evidence" value="ECO:0000250"/>
    <property type="project" value="UniProtKB"/>
</dbReference>
<dbReference type="GO" id="GO:0035695">
    <property type="term" value="P:mitophagy by internal vacuole formation"/>
    <property type="evidence" value="ECO:0000318"/>
    <property type="project" value="GO_Central"/>
</dbReference>
<dbReference type="InterPro" id="IPR026169">
    <property type="entry name" value="MIEAP"/>
</dbReference>
<dbReference type="InterPro" id="IPR031981">
    <property type="entry name" value="MIEAP_C"/>
</dbReference>
<dbReference type="PANTHER" id="PTHR21771:SF0">
    <property type="entry name" value="MITOCHONDRIA-EATING PROTEIN"/>
    <property type="match status" value="1"/>
</dbReference>
<dbReference type="PANTHER" id="PTHR21771">
    <property type="entry name" value="MITOCHONDRIA-EATING PROTEIN-RELATED"/>
    <property type="match status" value="1"/>
</dbReference>
<dbReference type="Pfam" id="PF16026">
    <property type="entry name" value="MIEAP"/>
    <property type="match status" value="1"/>
</dbReference>
<keyword id="KW-0175">Coiled coil</keyword>
<keyword id="KW-0963">Cytoplasm</keyword>
<keyword id="KW-0446">Lipid-binding</keyword>
<keyword id="KW-0472">Membrane</keyword>
<keyword id="KW-0496">Mitochondrion</keyword>
<keyword id="KW-1000">Mitochondrion outer membrane</keyword>
<keyword id="KW-0597">Phosphoprotein</keyword>
<keyword id="KW-1185">Reference proteome</keyword>
<accession>E1BLK7</accession>
<protein>
    <recommendedName>
        <fullName>Mitochondria-eating protein</fullName>
    </recommendedName>
    <alternativeName>
        <fullName>Spermatogenesis-associated protein 18</fullName>
    </alternativeName>
</protein>
<evidence type="ECO:0000250" key="1">
    <source>
        <dbReference type="UniProtKB" id="Q0P557"/>
    </source>
</evidence>
<evidence type="ECO:0000250" key="2">
    <source>
        <dbReference type="UniProtKB" id="Q6AYL6"/>
    </source>
</evidence>
<evidence type="ECO:0000250" key="3">
    <source>
        <dbReference type="UniProtKB" id="Q8TC71"/>
    </source>
</evidence>
<evidence type="ECO:0000255" key="4"/>
<evidence type="ECO:0000256" key="5">
    <source>
        <dbReference type="SAM" id="MobiDB-lite"/>
    </source>
</evidence>
<evidence type="ECO:0000305" key="6"/>
<reference key="1">
    <citation type="journal article" date="2009" name="Science">
        <title>The genome sequence of taurine cattle: a window to ruminant biology and evolution.</title>
        <authorList>
            <consortium name="The bovine genome sequencing and analysis consortium"/>
        </authorList>
    </citation>
    <scope>NUCLEOTIDE SEQUENCE [LARGE SCALE GENOMIC DNA]</scope>
    <source>
        <strain>Hereford</strain>
    </source>
</reference>
<organism>
    <name type="scientific">Bos taurus</name>
    <name type="common">Bovine</name>
    <dbReference type="NCBI Taxonomy" id="9913"/>
    <lineage>
        <taxon>Eukaryota</taxon>
        <taxon>Metazoa</taxon>
        <taxon>Chordata</taxon>
        <taxon>Craniata</taxon>
        <taxon>Vertebrata</taxon>
        <taxon>Euteleostomi</taxon>
        <taxon>Mammalia</taxon>
        <taxon>Eutheria</taxon>
        <taxon>Laurasiatheria</taxon>
        <taxon>Artiodactyla</taxon>
        <taxon>Ruminantia</taxon>
        <taxon>Pecora</taxon>
        <taxon>Bovidae</taxon>
        <taxon>Bovinae</taxon>
        <taxon>Bos</taxon>
    </lineage>
</organism>
<comment type="function">
    <text evidence="3">Key regulator of mitochondrial quality that mediates the repairing or degradation of unhealthy mitochondria in response to mitochondrial damage. Mediator of mitochondrial protein catabolic process (also named MALM) by mediating the degradation of damaged proteins inside mitochondria by promoting the accumulation in the mitochondrial matrix of hydrolases that are characteristic of the lysosomal lumen. Also involved in mitochondrion degradation of damaged mitochondria by promoting the formation of vacuole-like structures (named MIV), which engulf and degrade unhealthy mitochondria by accumulating lysosomes. The physical interaction of SPATA18/MIEAP, BNIP3 and BNIP3L/NIX at the mitochondrial outer membrane regulates the opening of a pore in the mitochondrial double membrane in order to mediate the translocation of lysosomal proteins from the cytoplasm to the mitochondrial matrix. Binds cardiolipin. May form molecular condensates (non-membrane-bounded organelles) within mitochondria that compartmentalize and promote cardiolipin metabolism.</text>
</comment>
<comment type="subunit">
    <text evidence="3">Interacts (via coiled-coil domains) with BNIP3L (via BH3 domain). Interacts (via coiled-coil domains) with BNIP3 (via BH3 domain). Interacts with YWHAG/14-3-3 protein gamma; a protein that also plays a role in MALM.</text>
</comment>
<comment type="subcellular location">
    <subcellularLocation>
        <location evidence="3">Cytoplasm</location>
        <location evidence="3">Cytosol</location>
    </subcellularLocation>
    <subcellularLocation>
        <location evidence="3">Mitochondrion outer membrane</location>
    </subcellularLocation>
    <subcellularLocation>
        <location evidence="3">Mitochondrion matrix</location>
    </subcellularLocation>
    <text evidence="3">Localizes to the cytosol under normal conditions. Relocalizes to mitochondrion outer membrane following cellular stress. May form molecular condensates in the mitochondrial matrix. Colocalizes with BNIP3 and BNIP3L at the mitochondrion outer membrane.</text>
</comment>
<comment type="similarity">
    <text evidence="6">Belongs to the MIEAP family.</text>
</comment>
<name>MIEAP_BOVIN</name>
<proteinExistence type="inferred from homology"/>
<gene>
    <name type="primary">SPATA18</name>
    <name type="synonym">MIEAP</name>
</gene>
<feature type="chain" id="PRO_0000408328" description="Mitochondria-eating protein">
    <location>
        <begin position="1"/>
        <end position="537"/>
    </location>
</feature>
<feature type="region of interest" description="Interaction with YWHAG/14-3-3 protein gamma" evidence="3">
    <location>
        <begin position="1"/>
        <end position="273"/>
    </location>
</feature>
<feature type="region of interest" description="Disordered" evidence="5">
    <location>
        <begin position="171"/>
        <end position="221"/>
    </location>
</feature>
<feature type="region of interest" description="Disordered" evidence="5">
    <location>
        <begin position="249"/>
        <end position="293"/>
    </location>
</feature>
<feature type="coiled-coil region" evidence="4">
    <location>
        <begin position="115"/>
        <end position="253"/>
    </location>
</feature>
<feature type="compositionally biased region" description="Basic and acidic residues" evidence="5">
    <location>
        <begin position="179"/>
        <end position="217"/>
    </location>
</feature>
<feature type="compositionally biased region" description="Low complexity" evidence="5">
    <location>
        <begin position="253"/>
        <end position="287"/>
    </location>
</feature>
<feature type="modified residue" description="Phosphoserine" evidence="2">
    <location>
        <position position="85"/>
    </location>
</feature>
<feature type="modified residue" description="Phosphoserine" evidence="1">
    <location>
        <position position="127"/>
    </location>
</feature>
<feature type="modified residue" description="Phosphoserine" evidence="2">
    <location>
        <position position="154"/>
    </location>
</feature>
<feature type="modified residue" description="Phosphoserine" evidence="2">
    <location>
        <position position="157"/>
    </location>
</feature>
<feature type="modified residue" description="Phosphoserine" evidence="2">
    <location>
        <position position="286"/>
    </location>
</feature>
<feature type="modified residue" description="Phosphoserine" evidence="2">
    <location>
        <position position="508"/>
    </location>
</feature>
<sequence length="537" mass="60584">MADNLRRLVSNEALRSLQDKLESWLREYNANSCDQNLNHCLELIEQVAKVQGQLFGILTIAAQEGGHYDGVETIKSRLLPWLEASFTAASLGKPVDSKVPSLQDTFDKDRHKESGTRDIQQLDADLSATRNQLNQVQDDMAETEKTLEEPKNRSAISLLAAEEEINQLKKQLKSLQAQEESRHRNSDRRRSEKRGSERRRVELRGSEQRVSDLDRRSANQRNAEAVCDYEKQLRTLKDEIAVLSAEKSVLQGRSARSRSPSPAPCSRSHSRSRSTSPSSAKARTPSPNRAKLSSVARKAALLSRFSDAYSQGRLDAQCLLRRCIDKAETVQRIIYIATVEAFHVAKMAFRHFKIRVRKSLTPSCAGSNDFEDAVSDYIICHLDLYDSQSSVNDVIRAMNVNPKISFPPEVDFCLLSNFIQEICCIAFAMQTLEPPLDIAFGADGEIFNDCKYRRSYDSDFTAPLVFYHVWPALMENDCVIMKGEAVTRRGAFWNSVRSVSRCRSRSLSPICPRTRIGLGMISRSRSPSPIRCGLPRF</sequence>